<evidence type="ECO:0000255" key="1">
    <source>
        <dbReference type="HAMAP-Rule" id="MF_00145"/>
    </source>
</evidence>
<name>PGK_STRA1</name>
<comment type="catalytic activity">
    <reaction evidence="1">
        <text>(2R)-3-phosphoglycerate + ATP = (2R)-3-phospho-glyceroyl phosphate + ADP</text>
        <dbReference type="Rhea" id="RHEA:14801"/>
        <dbReference type="ChEBI" id="CHEBI:30616"/>
        <dbReference type="ChEBI" id="CHEBI:57604"/>
        <dbReference type="ChEBI" id="CHEBI:58272"/>
        <dbReference type="ChEBI" id="CHEBI:456216"/>
        <dbReference type="EC" id="2.7.2.3"/>
    </reaction>
</comment>
<comment type="pathway">
    <text evidence="1">Carbohydrate degradation; glycolysis; pyruvate from D-glyceraldehyde 3-phosphate: step 2/5.</text>
</comment>
<comment type="subunit">
    <text evidence="1">Monomer.</text>
</comment>
<comment type="subcellular location">
    <subcellularLocation>
        <location evidence="1">Cytoplasm</location>
    </subcellularLocation>
</comment>
<comment type="similarity">
    <text evidence="1">Belongs to the phosphoglycerate kinase family.</text>
</comment>
<dbReference type="EC" id="2.7.2.3" evidence="1"/>
<dbReference type="EMBL" id="CP000114">
    <property type="protein sequence ID" value="ABA45760.1"/>
    <property type="molecule type" value="Genomic_DNA"/>
</dbReference>
<dbReference type="RefSeq" id="WP_001096753.1">
    <property type="nucleotide sequence ID" value="NC_007432.1"/>
</dbReference>
<dbReference type="SMR" id="Q3JZB8"/>
<dbReference type="KEGG" id="sak:SAK_1788"/>
<dbReference type="HOGENOM" id="CLU_025427_0_1_9"/>
<dbReference type="UniPathway" id="UPA00109">
    <property type="reaction ID" value="UER00185"/>
</dbReference>
<dbReference type="GO" id="GO:0005829">
    <property type="term" value="C:cytosol"/>
    <property type="evidence" value="ECO:0007669"/>
    <property type="project" value="TreeGrafter"/>
</dbReference>
<dbReference type="GO" id="GO:0043531">
    <property type="term" value="F:ADP binding"/>
    <property type="evidence" value="ECO:0007669"/>
    <property type="project" value="TreeGrafter"/>
</dbReference>
<dbReference type="GO" id="GO:0005524">
    <property type="term" value="F:ATP binding"/>
    <property type="evidence" value="ECO:0007669"/>
    <property type="project" value="UniProtKB-KW"/>
</dbReference>
<dbReference type="GO" id="GO:0004618">
    <property type="term" value="F:phosphoglycerate kinase activity"/>
    <property type="evidence" value="ECO:0007669"/>
    <property type="project" value="UniProtKB-UniRule"/>
</dbReference>
<dbReference type="GO" id="GO:0006094">
    <property type="term" value="P:gluconeogenesis"/>
    <property type="evidence" value="ECO:0007669"/>
    <property type="project" value="TreeGrafter"/>
</dbReference>
<dbReference type="GO" id="GO:0006096">
    <property type="term" value="P:glycolytic process"/>
    <property type="evidence" value="ECO:0007669"/>
    <property type="project" value="UniProtKB-UniRule"/>
</dbReference>
<dbReference type="FunFam" id="3.40.50.1260:FF:000001">
    <property type="entry name" value="Phosphoglycerate kinase"/>
    <property type="match status" value="1"/>
</dbReference>
<dbReference type="FunFam" id="3.40.50.1260:FF:000008">
    <property type="entry name" value="Phosphoglycerate kinase"/>
    <property type="match status" value="1"/>
</dbReference>
<dbReference type="Gene3D" id="3.40.50.1260">
    <property type="entry name" value="Phosphoglycerate kinase, N-terminal domain"/>
    <property type="match status" value="2"/>
</dbReference>
<dbReference type="HAMAP" id="MF_00145">
    <property type="entry name" value="Phosphoglyc_kinase"/>
    <property type="match status" value="1"/>
</dbReference>
<dbReference type="InterPro" id="IPR001576">
    <property type="entry name" value="Phosphoglycerate_kinase"/>
</dbReference>
<dbReference type="InterPro" id="IPR015911">
    <property type="entry name" value="Phosphoglycerate_kinase_CS"/>
</dbReference>
<dbReference type="InterPro" id="IPR015824">
    <property type="entry name" value="Phosphoglycerate_kinase_N"/>
</dbReference>
<dbReference type="InterPro" id="IPR036043">
    <property type="entry name" value="Phosphoglycerate_kinase_sf"/>
</dbReference>
<dbReference type="PANTHER" id="PTHR11406">
    <property type="entry name" value="PHOSPHOGLYCERATE KINASE"/>
    <property type="match status" value="1"/>
</dbReference>
<dbReference type="PANTHER" id="PTHR11406:SF23">
    <property type="entry name" value="PHOSPHOGLYCERATE KINASE 1, CHLOROPLASTIC-RELATED"/>
    <property type="match status" value="1"/>
</dbReference>
<dbReference type="Pfam" id="PF00162">
    <property type="entry name" value="PGK"/>
    <property type="match status" value="1"/>
</dbReference>
<dbReference type="PIRSF" id="PIRSF000724">
    <property type="entry name" value="Pgk"/>
    <property type="match status" value="1"/>
</dbReference>
<dbReference type="PRINTS" id="PR00477">
    <property type="entry name" value="PHGLYCKINASE"/>
</dbReference>
<dbReference type="SUPFAM" id="SSF53748">
    <property type="entry name" value="Phosphoglycerate kinase"/>
    <property type="match status" value="1"/>
</dbReference>
<dbReference type="PROSITE" id="PS00111">
    <property type="entry name" value="PGLYCERATE_KINASE"/>
    <property type="match status" value="1"/>
</dbReference>
<keyword id="KW-0067">ATP-binding</keyword>
<keyword id="KW-0963">Cytoplasm</keyword>
<keyword id="KW-0324">Glycolysis</keyword>
<keyword id="KW-0418">Kinase</keyword>
<keyword id="KW-0547">Nucleotide-binding</keyword>
<keyword id="KW-0808">Transferase</keyword>
<sequence>MAKLTVKDVDLKGKKVLVRVDFNVPLKDGVITNDNRITAALPTIKYIIEQGGRAILFSHLGRVKEEADKEGKSLAPVAADLAAKLGQDVVFPGVTRGAKLEEAINALEDGQVLLVENTRFEDVDGKKESKNDEELGKYWASLGDGIFVNDAFGTAHRAHASNVGISANVEKAVAGFLLENEIAYIQEAVETPERPFVAILGGSKVSDKIGVIENLLEKADKVLIGGGMTYTFYKAQGIEIGNSLVEEDKLDVAKDLLEKSNGKLILPVDSKEANAFAGYTEVRDTEGEAVSEGFLGLDIGPKSIAKFDEALTGAKTVVWNGPMGVFENPDFQAGTIGVMDAIVKQPGVKSIIGGGDSAAAAINLGRADKFSWISTGGGASMELLEGKVLPGLAALTEK</sequence>
<proteinExistence type="inferred from homology"/>
<accession>Q3JZB8</accession>
<feature type="chain" id="PRO_1000009653" description="Phosphoglycerate kinase">
    <location>
        <begin position="1"/>
        <end position="398"/>
    </location>
</feature>
<feature type="binding site" evidence="1">
    <location>
        <begin position="21"/>
        <end position="23"/>
    </location>
    <ligand>
        <name>substrate</name>
    </ligand>
</feature>
<feature type="binding site" evidence="1">
    <location>
        <position position="36"/>
    </location>
    <ligand>
        <name>substrate</name>
    </ligand>
</feature>
<feature type="binding site" evidence="1">
    <location>
        <begin position="59"/>
        <end position="62"/>
    </location>
    <ligand>
        <name>substrate</name>
    </ligand>
</feature>
<feature type="binding site" evidence="1">
    <location>
        <position position="119"/>
    </location>
    <ligand>
        <name>substrate</name>
    </ligand>
</feature>
<feature type="binding site" evidence="1">
    <location>
        <position position="157"/>
    </location>
    <ligand>
        <name>substrate</name>
    </ligand>
</feature>
<feature type="binding site" evidence="1">
    <location>
        <position position="208"/>
    </location>
    <ligand>
        <name>ATP</name>
        <dbReference type="ChEBI" id="CHEBI:30616"/>
    </ligand>
</feature>
<feature type="binding site" evidence="1">
    <location>
        <position position="296"/>
    </location>
    <ligand>
        <name>ATP</name>
        <dbReference type="ChEBI" id="CHEBI:30616"/>
    </ligand>
</feature>
<feature type="binding site" evidence="1">
    <location>
        <position position="327"/>
    </location>
    <ligand>
        <name>ATP</name>
        <dbReference type="ChEBI" id="CHEBI:30616"/>
    </ligand>
</feature>
<feature type="binding site" evidence="1">
    <location>
        <begin position="354"/>
        <end position="357"/>
    </location>
    <ligand>
        <name>ATP</name>
        <dbReference type="ChEBI" id="CHEBI:30616"/>
    </ligand>
</feature>
<gene>
    <name evidence="1" type="primary">pgk</name>
    <name type="ordered locus">SAK_1788</name>
</gene>
<protein>
    <recommendedName>
        <fullName evidence="1">Phosphoglycerate kinase</fullName>
        <ecNumber evidence="1">2.7.2.3</ecNumber>
    </recommendedName>
</protein>
<reference key="1">
    <citation type="journal article" date="2005" name="Proc. Natl. Acad. Sci. U.S.A.">
        <title>Genome analysis of multiple pathogenic isolates of Streptococcus agalactiae: implications for the microbial 'pan-genome'.</title>
        <authorList>
            <person name="Tettelin H."/>
            <person name="Masignani V."/>
            <person name="Cieslewicz M.J."/>
            <person name="Donati C."/>
            <person name="Medini D."/>
            <person name="Ward N.L."/>
            <person name="Angiuoli S.V."/>
            <person name="Crabtree J."/>
            <person name="Jones A.L."/>
            <person name="Durkin A.S."/>
            <person name="DeBoy R.T."/>
            <person name="Davidsen T.M."/>
            <person name="Mora M."/>
            <person name="Scarselli M."/>
            <person name="Margarit y Ros I."/>
            <person name="Peterson J.D."/>
            <person name="Hauser C.R."/>
            <person name="Sundaram J.P."/>
            <person name="Nelson W.C."/>
            <person name="Madupu R."/>
            <person name="Brinkac L.M."/>
            <person name="Dodson R.J."/>
            <person name="Rosovitz M.J."/>
            <person name="Sullivan S.A."/>
            <person name="Daugherty S.C."/>
            <person name="Haft D.H."/>
            <person name="Selengut J."/>
            <person name="Gwinn M.L."/>
            <person name="Zhou L."/>
            <person name="Zafar N."/>
            <person name="Khouri H."/>
            <person name="Radune D."/>
            <person name="Dimitrov G."/>
            <person name="Watkins K."/>
            <person name="O'Connor K.J."/>
            <person name="Smith S."/>
            <person name="Utterback T.R."/>
            <person name="White O."/>
            <person name="Rubens C.E."/>
            <person name="Grandi G."/>
            <person name="Madoff L.C."/>
            <person name="Kasper D.L."/>
            <person name="Telford J.L."/>
            <person name="Wessels M.R."/>
            <person name="Rappuoli R."/>
            <person name="Fraser C.M."/>
        </authorList>
    </citation>
    <scope>NUCLEOTIDE SEQUENCE [LARGE SCALE GENOMIC DNA]</scope>
    <source>
        <strain>ATCC 27591 / A909 / CDC SS700</strain>
    </source>
</reference>
<organism>
    <name type="scientific">Streptococcus agalactiae serotype Ia (strain ATCC 27591 / A909 / CDC SS700)</name>
    <dbReference type="NCBI Taxonomy" id="205921"/>
    <lineage>
        <taxon>Bacteria</taxon>
        <taxon>Bacillati</taxon>
        <taxon>Bacillota</taxon>
        <taxon>Bacilli</taxon>
        <taxon>Lactobacillales</taxon>
        <taxon>Streptococcaceae</taxon>
        <taxon>Streptococcus</taxon>
    </lineage>
</organism>